<comment type="function">
    <text evidence="1">Chaperone involved in the maturation of iron-sulfur cluster-containing proteins. Has a low intrinsic ATPase activity which is markedly stimulated by HscB.</text>
</comment>
<comment type="similarity">
    <text evidence="1">Belongs to the heat shock protein 70 family.</text>
</comment>
<gene>
    <name evidence="1" type="primary">hscA</name>
    <name type="ordered locus">NMA1340</name>
</gene>
<dbReference type="EMBL" id="AL157959">
    <property type="protein sequence ID" value="CAM08517.1"/>
    <property type="molecule type" value="Genomic_DNA"/>
</dbReference>
<dbReference type="PIR" id="A81903">
    <property type="entry name" value="A81903"/>
</dbReference>
<dbReference type="RefSeq" id="WP_002246940.1">
    <property type="nucleotide sequence ID" value="NC_003116.1"/>
</dbReference>
<dbReference type="SMR" id="Q9JUF4"/>
<dbReference type="EnsemblBacteria" id="CAM08517">
    <property type="protein sequence ID" value="CAM08517"/>
    <property type="gene ID" value="NMA1340"/>
</dbReference>
<dbReference type="KEGG" id="nma:NMA1340"/>
<dbReference type="HOGENOM" id="CLU_005965_2_3_4"/>
<dbReference type="Proteomes" id="UP000000626">
    <property type="component" value="Chromosome"/>
</dbReference>
<dbReference type="GO" id="GO:0005524">
    <property type="term" value="F:ATP binding"/>
    <property type="evidence" value="ECO:0007669"/>
    <property type="project" value="UniProtKB-KW"/>
</dbReference>
<dbReference type="GO" id="GO:0016887">
    <property type="term" value="F:ATP hydrolysis activity"/>
    <property type="evidence" value="ECO:0007669"/>
    <property type="project" value="UniProtKB-UniRule"/>
</dbReference>
<dbReference type="GO" id="GO:0140662">
    <property type="term" value="F:ATP-dependent protein folding chaperone"/>
    <property type="evidence" value="ECO:0007669"/>
    <property type="project" value="InterPro"/>
</dbReference>
<dbReference type="GO" id="GO:0051082">
    <property type="term" value="F:unfolded protein binding"/>
    <property type="evidence" value="ECO:0007669"/>
    <property type="project" value="InterPro"/>
</dbReference>
<dbReference type="GO" id="GO:0016226">
    <property type="term" value="P:iron-sulfur cluster assembly"/>
    <property type="evidence" value="ECO:0007669"/>
    <property type="project" value="InterPro"/>
</dbReference>
<dbReference type="CDD" id="cd10236">
    <property type="entry name" value="ASKHA_NBD_HSP70_HscA"/>
    <property type="match status" value="1"/>
</dbReference>
<dbReference type="FunFam" id="3.30.420.40:FF:000046">
    <property type="entry name" value="Chaperone protein HscA"/>
    <property type="match status" value="1"/>
</dbReference>
<dbReference type="FunFam" id="2.60.34.10:FF:000005">
    <property type="entry name" value="Chaperone protein HscA homolog"/>
    <property type="match status" value="1"/>
</dbReference>
<dbReference type="Gene3D" id="1.20.1270.10">
    <property type="match status" value="1"/>
</dbReference>
<dbReference type="Gene3D" id="3.30.420.40">
    <property type="match status" value="2"/>
</dbReference>
<dbReference type="Gene3D" id="3.90.640.10">
    <property type="entry name" value="Actin, Chain A, domain 4"/>
    <property type="match status" value="1"/>
</dbReference>
<dbReference type="Gene3D" id="2.60.34.10">
    <property type="entry name" value="Substrate Binding Domain Of DNAk, Chain A, domain 1"/>
    <property type="match status" value="1"/>
</dbReference>
<dbReference type="HAMAP" id="MF_00679">
    <property type="entry name" value="HscA"/>
    <property type="match status" value="1"/>
</dbReference>
<dbReference type="InterPro" id="IPR043129">
    <property type="entry name" value="ATPase_NBD"/>
</dbReference>
<dbReference type="InterPro" id="IPR018181">
    <property type="entry name" value="Heat_shock_70_CS"/>
</dbReference>
<dbReference type="InterPro" id="IPR042039">
    <property type="entry name" value="HscA_NBD"/>
</dbReference>
<dbReference type="InterPro" id="IPR029048">
    <property type="entry name" value="HSP70_C_sf"/>
</dbReference>
<dbReference type="InterPro" id="IPR029047">
    <property type="entry name" value="HSP70_peptide-bd_sf"/>
</dbReference>
<dbReference type="InterPro" id="IPR013126">
    <property type="entry name" value="Hsp_70_fam"/>
</dbReference>
<dbReference type="InterPro" id="IPR010236">
    <property type="entry name" value="ISC_FeS_clus_asmbl_HscA"/>
</dbReference>
<dbReference type="NCBIfam" id="TIGR01991">
    <property type="entry name" value="HscA"/>
    <property type="match status" value="1"/>
</dbReference>
<dbReference type="NCBIfam" id="NF003520">
    <property type="entry name" value="PRK05183.1"/>
    <property type="match status" value="1"/>
</dbReference>
<dbReference type="PANTHER" id="PTHR19375">
    <property type="entry name" value="HEAT SHOCK PROTEIN 70KDA"/>
    <property type="match status" value="1"/>
</dbReference>
<dbReference type="Pfam" id="PF00012">
    <property type="entry name" value="HSP70"/>
    <property type="match status" value="1"/>
</dbReference>
<dbReference type="PRINTS" id="PR00301">
    <property type="entry name" value="HEATSHOCK70"/>
</dbReference>
<dbReference type="SUPFAM" id="SSF53067">
    <property type="entry name" value="Actin-like ATPase domain"/>
    <property type="match status" value="2"/>
</dbReference>
<dbReference type="SUPFAM" id="SSF100934">
    <property type="entry name" value="Heat shock protein 70kD (HSP70), C-terminal subdomain"/>
    <property type="match status" value="1"/>
</dbReference>
<dbReference type="SUPFAM" id="SSF100920">
    <property type="entry name" value="Heat shock protein 70kD (HSP70), peptide-binding domain"/>
    <property type="match status" value="1"/>
</dbReference>
<dbReference type="PROSITE" id="PS00297">
    <property type="entry name" value="HSP70_1"/>
    <property type="match status" value="1"/>
</dbReference>
<dbReference type="PROSITE" id="PS00329">
    <property type="entry name" value="HSP70_2"/>
    <property type="match status" value="1"/>
</dbReference>
<reference key="1">
    <citation type="journal article" date="2000" name="Nature">
        <title>Complete DNA sequence of a serogroup A strain of Neisseria meningitidis Z2491.</title>
        <authorList>
            <person name="Parkhill J."/>
            <person name="Achtman M."/>
            <person name="James K.D."/>
            <person name="Bentley S.D."/>
            <person name="Churcher C.M."/>
            <person name="Klee S.R."/>
            <person name="Morelli G."/>
            <person name="Basham D."/>
            <person name="Brown D."/>
            <person name="Chillingworth T."/>
            <person name="Davies R.M."/>
            <person name="Davis P."/>
            <person name="Devlin K."/>
            <person name="Feltwell T."/>
            <person name="Hamlin N."/>
            <person name="Holroyd S."/>
            <person name="Jagels K."/>
            <person name="Leather S."/>
            <person name="Moule S."/>
            <person name="Mungall K.L."/>
            <person name="Quail M.A."/>
            <person name="Rajandream M.A."/>
            <person name="Rutherford K.M."/>
            <person name="Simmonds M."/>
            <person name="Skelton J."/>
            <person name="Whitehead S."/>
            <person name="Spratt B.G."/>
            <person name="Barrell B.G."/>
        </authorList>
    </citation>
    <scope>NUCLEOTIDE SEQUENCE [LARGE SCALE GENOMIC DNA]</scope>
    <source>
        <strain>DSM 15465 / Z2491</strain>
    </source>
</reference>
<proteinExistence type="inferred from homology"/>
<evidence type="ECO:0000255" key="1">
    <source>
        <dbReference type="HAMAP-Rule" id="MF_00679"/>
    </source>
</evidence>
<feature type="chain" id="PRO_0000078634" description="Chaperone protein HscA homolog">
    <location>
        <begin position="1"/>
        <end position="620"/>
    </location>
</feature>
<protein>
    <recommendedName>
        <fullName evidence="1">Chaperone protein HscA homolog</fullName>
    </recommendedName>
</protein>
<keyword id="KW-0067">ATP-binding</keyword>
<keyword id="KW-0143">Chaperone</keyword>
<keyword id="KW-0547">Nucleotide-binding</keyword>
<sequence length="620" mass="66292">MALLQISEPGMSAAPHRHRLAAGIDLGTTNSLVATVRSGSAACLPDAEGRVTLPSVVRYLENGGIEVGKTALSAQKTDPLNTVSSAKRLIGRTLADLHQNTHYLPYRFGDNQRVIELHTRQGVKTPVEVSAEILKTLKSRAEETLGGDLVGVVITVPAYFDDAQRQATKDAARLAGLNVLRLLNEPTAAAIAYGLDNASEGTFVVYDLGGGTFDVSVLQLTKGLFEVKATGGNSALGGDDFDHRLFCRLLEQNGLSQLNEQDSQLLLSLVRAAKEQLTTQTEARIQATLSDGMPIDTSISRAEFHNLTQHLVMKTLEPVTQALKDAGVGKNEVKGVIMVGGSTRMLHVQQAVATFFGQTPLNNLNPDEVVALGAAIQANVLAGNKTDGEWLLLDVTPLSLGLETYGGLAEKIIPRNSTIPTARAQDFTTFKDGQTAMTIHVVQGERELVSDCRSLAKFTLRGIPPMAAGAARIRVTFQIDADGLLSVSAQEQSTGVQAQIEVKPSYGLDDGAITRMLKDSMDNAAEDMAARARAEAVVEAESLTDAVNAALELDSDLLDAKELQQIRQGIADLQGRLKDGKAEDIRSAVAKLSRSTDNFAAKRMNRNIQRALTGQSVDNI</sequence>
<organism>
    <name type="scientific">Neisseria meningitidis serogroup A / serotype 4A (strain DSM 15465 / Z2491)</name>
    <dbReference type="NCBI Taxonomy" id="122587"/>
    <lineage>
        <taxon>Bacteria</taxon>
        <taxon>Pseudomonadati</taxon>
        <taxon>Pseudomonadota</taxon>
        <taxon>Betaproteobacteria</taxon>
        <taxon>Neisseriales</taxon>
        <taxon>Neisseriaceae</taxon>
        <taxon>Neisseria</taxon>
    </lineage>
</organism>
<name>HSCA_NEIMA</name>
<accession>Q9JUF4</accession>
<accession>A1IRW9</accession>